<name>BNIPL_HUMAN</name>
<sequence>MGTIQEAGKKTDVGVREIAEAPELGAALRHGELELKEEWQDEEFPRLLPEEAGTSEDPEDPKGDSQAAAGTPSTLALCGQRPMRKRLSAPELRLSLTKGPGNDGASPTQSAPSSPDGSSDLEIDELETPSDSEQLDSGHEFEWEDELPRAEGLGTSETAERLGRGCMWDVTGEDGHHWRVFRMGPREQRVDMTVIEPYKKVLSHGGYHGDGLNAVILFASCYLPRSSIPNYTYVMEHLFRYMVGTLELLVAENYLLVHLSGGTSRAQVPPLSWIRQCYRTLDRRLRKNLRALVVVHATWYVKAFLALLRPFISSKFTRKIRFLDSLGELAQLISLDQVHIPEAVRQLDRDLHGSGGT</sequence>
<organism>
    <name type="scientific">Homo sapiens</name>
    <name type="common">Human</name>
    <dbReference type="NCBI Taxonomy" id="9606"/>
    <lineage>
        <taxon>Eukaryota</taxon>
        <taxon>Metazoa</taxon>
        <taxon>Chordata</taxon>
        <taxon>Craniata</taxon>
        <taxon>Vertebrata</taxon>
        <taxon>Euteleostomi</taxon>
        <taxon>Mammalia</taxon>
        <taxon>Eutheria</taxon>
        <taxon>Euarchontoglires</taxon>
        <taxon>Primates</taxon>
        <taxon>Haplorrhini</taxon>
        <taxon>Catarrhini</taxon>
        <taxon>Hominidae</taxon>
        <taxon>Homo</taxon>
    </lineage>
</organism>
<accession>Q7Z465</accession>
<accession>Q6DK43</accession>
<accession>Q8TCY7</accession>
<accession>Q8WYG2</accession>
<protein>
    <recommendedName>
        <fullName>Bcl-2/adenovirus E1B 19 kDa-interacting protein 2-like protein</fullName>
    </recommendedName>
</protein>
<evidence type="ECO:0000255" key="1">
    <source>
        <dbReference type="PROSITE-ProRule" id="PRU00056"/>
    </source>
</evidence>
<evidence type="ECO:0000256" key="2">
    <source>
        <dbReference type="SAM" id="MobiDB-lite"/>
    </source>
</evidence>
<evidence type="ECO:0000269" key="3">
    <source>
    </source>
</evidence>
<evidence type="ECO:0000269" key="4">
    <source>
    </source>
</evidence>
<evidence type="ECO:0000303" key="5">
    <source>
    </source>
</evidence>
<evidence type="ECO:0000303" key="6">
    <source>
    </source>
</evidence>
<reference key="1">
    <citation type="journal article" date="2002" name="J. Biol. Chem.">
        <title>The BNIP-2 and Cdc42GAP homology/Sec14p-like domain of BNIP-Salpha is a novel apoptosis-inducing sequence.</title>
        <authorList>
            <person name="Zhou Y.T."/>
            <person name="Soh U.J.K."/>
            <person name="Shang X."/>
            <person name="Guy G.R."/>
            <person name="Low B.C."/>
        </authorList>
    </citation>
    <scope>NUCLEOTIDE SEQUENCE [MRNA] (ISOFORMS 2 AND 3)</scope>
</reference>
<reference key="2">
    <citation type="journal article" date="2003" name="Biochem. Biophys. Res. Commun.">
        <title>BNIPL-2, a novel homologue of BNIP-2, interacts with Bcl-2 and Cdc42GAP in apoptosis.</title>
        <authorList>
            <person name="Qin W."/>
            <person name="Hu J."/>
            <person name="Guo M."/>
            <person name="Xu J."/>
            <person name="Li J."/>
            <person name="Yao G."/>
            <person name="Zhou X."/>
            <person name="Jiang H."/>
            <person name="Zhang P."/>
            <person name="Shen L."/>
            <person name="Wan D."/>
            <person name="Gu J."/>
        </authorList>
    </citation>
    <scope>NUCLEOTIDE SEQUENCE [MRNA] (ISOFORM 1)</scope>
    <scope>INTERACTION WITH BCL2 AND ARHGAP1</scope>
    <scope>FUNCTION</scope>
    <source>
        <tissue>Placenta</tissue>
    </source>
</reference>
<reference key="3">
    <citation type="journal article" date="2006" name="Nature">
        <title>The DNA sequence and biological annotation of human chromosome 1.</title>
        <authorList>
            <person name="Gregory S.G."/>
            <person name="Barlow K.F."/>
            <person name="McLay K.E."/>
            <person name="Kaul R."/>
            <person name="Swarbreck D."/>
            <person name="Dunham A."/>
            <person name="Scott C.E."/>
            <person name="Howe K.L."/>
            <person name="Woodfine K."/>
            <person name="Spencer C.C.A."/>
            <person name="Jones M.C."/>
            <person name="Gillson C."/>
            <person name="Searle S."/>
            <person name="Zhou Y."/>
            <person name="Kokocinski F."/>
            <person name="McDonald L."/>
            <person name="Evans R."/>
            <person name="Phillips K."/>
            <person name="Atkinson A."/>
            <person name="Cooper R."/>
            <person name="Jones C."/>
            <person name="Hall R.E."/>
            <person name="Andrews T.D."/>
            <person name="Lloyd C."/>
            <person name="Ainscough R."/>
            <person name="Almeida J.P."/>
            <person name="Ambrose K.D."/>
            <person name="Anderson F."/>
            <person name="Andrew R.W."/>
            <person name="Ashwell R.I.S."/>
            <person name="Aubin K."/>
            <person name="Babbage A.K."/>
            <person name="Bagguley C.L."/>
            <person name="Bailey J."/>
            <person name="Beasley H."/>
            <person name="Bethel G."/>
            <person name="Bird C.P."/>
            <person name="Bray-Allen S."/>
            <person name="Brown J.Y."/>
            <person name="Brown A.J."/>
            <person name="Buckley D."/>
            <person name="Burton J."/>
            <person name="Bye J."/>
            <person name="Carder C."/>
            <person name="Chapman J.C."/>
            <person name="Clark S.Y."/>
            <person name="Clarke G."/>
            <person name="Clee C."/>
            <person name="Cobley V."/>
            <person name="Collier R.E."/>
            <person name="Corby N."/>
            <person name="Coville G.J."/>
            <person name="Davies J."/>
            <person name="Deadman R."/>
            <person name="Dunn M."/>
            <person name="Earthrowl M."/>
            <person name="Ellington A.G."/>
            <person name="Errington H."/>
            <person name="Frankish A."/>
            <person name="Frankland J."/>
            <person name="French L."/>
            <person name="Garner P."/>
            <person name="Garnett J."/>
            <person name="Gay L."/>
            <person name="Ghori M.R.J."/>
            <person name="Gibson R."/>
            <person name="Gilby L.M."/>
            <person name="Gillett W."/>
            <person name="Glithero R.J."/>
            <person name="Grafham D.V."/>
            <person name="Griffiths C."/>
            <person name="Griffiths-Jones S."/>
            <person name="Grocock R."/>
            <person name="Hammond S."/>
            <person name="Harrison E.S.I."/>
            <person name="Hart E."/>
            <person name="Haugen E."/>
            <person name="Heath P.D."/>
            <person name="Holmes S."/>
            <person name="Holt K."/>
            <person name="Howden P.J."/>
            <person name="Hunt A.R."/>
            <person name="Hunt S.E."/>
            <person name="Hunter G."/>
            <person name="Isherwood J."/>
            <person name="James R."/>
            <person name="Johnson C."/>
            <person name="Johnson D."/>
            <person name="Joy A."/>
            <person name="Kay M."/>
            <person name="Kershaw J.K."/>
            <person name="Kibukawa M."/>
            <person name="Kimberley A.M."/>
            <person name="King A."/>
            <person name="Knights A.J."/>
            <person name="Lad H."/>
            <person name="Laird G."/>
            <person name="Lawlor S."/>
            <person name="Leongamornlert D.A."/>
            <person name="Lloyd D.M."/>
            <person name="Loveland J."/>
            <person name="Lovell J."/>
            <person name="Lush M.J."/>
            <person name="Lyne R."/>
            <person name="Martin S."/>
            <person name="Mashreghi-Mohammadi M."/>
            <person name="Matthews L."/>
            <person name="Matthews N.S.W."/>
            <person name="McLaren S."/>
            <person name="Milne S."/>
            <person name="Mistry S."/>
            <person name="Moore M.J.F."/>
            <person name="Nickerson T."/>
            <person name="O'Dell C.N."/>
            <person name="Oliver K."/>
            <person name="Palmeiri A."/>
            <person name="Palmer S.A."/>
            <person name="Parker A."/>
            <person name="Patel D."/>
            <person name="Pearce A.V."/>
            <person name="Peck A.I."/>
            <person name="Pelan S."/>
            <person name="Phelps K."/>
            <person name="Phillimore B.J."/>
            <person name="Plumb R."/>
            <person name="Rajan J."/>
            <person name="Raymond C."/>
            <person name="Rouse G."/>
            <person name="Saenphimmachak C."/>
            <person name="Sehra H.K."/>
            <person name="Sheridan E."/>
            <person name="Shownkeen R."/>
            <person name="Sims S."/>
            <person name="Skuce C.D."/>
            <person name="Smith M."/>
            <person name="Steward C."/>
            <person name="Subramanian S."/>
            <person name="Sycamore N."/>
            <person name="Tracey A."/>
            <person name="Tromans A."/>
            <person name="Van Helmond Z."/>
            <person name="Wall M."/>
            <person name="Wallis J.M."/>
            <person name="White S."/>
            <person name="Whitehead S.L."/>
            <person name="Wilkinson J.E."/>
            <person name="Willey D.L."/>
            <person name="Williams H."/>
            <person name="Wilming L."/>
            <person name="Wray P.W."/>
            <person name="Wu Z."/>
            <person name="Coulson A."/>
            <person name="Vaudin M."/>
            <person name="Sulston J.E."/>
            <person name="Durbin R.M."/>
            <person name="Hubbard T."/>
            <person name="Wooster R."/>
            <person name="Dunham I."/>
            <person name="Carter N.P."/>
            <person name="McVean G."/>
            <person name="Ross M.T."/>
            <person name="Harrow J."/>
            <person name="Olson M.V."/>
            <person name="Beck S."/>
            <person name="Rogers J."/>
            <person name="Bentley D.R."/>
        </authorList>
    </citation>
    <scope>NUCLEOTIDE SEQUENCE [LARGE SCALE GENOMIC DNA]</scope>
</reference>
<reference key="4">
    <citation type="journal article" date="2004" name="Genome Res.">
        <title>The status, quality, and expansion of the NIH full-length cDNA project: the Mammalian Gene Collection (MGC).</title>
        <authorList>
            <consortium name="The MGC Project Team"/>
        </authorList>
    </citation>
    <scope>NUCLEOTIDE SEQUENCE [LARGE SCALE MRNA] (ISOFORMS 1 AND 2)</scope>
</reference>
<reference key="5">
    <citation type="journal article" date="2003" name="FEBS Lett.">
        <title>The apoptosis-associated protein BNIPL interacts with two cell proliferation-related proteins, MIF and GFER.</title>
        <authorList>
            <person name="Shen L."/>
            <person name="Hu J."/>
            <person name="Lu H."/>
            <person name="Wu M."/>
            <person name="Qin W."/>
            <person name="Wan D."/>
            <person name="Li Y.-Y."/>
            <person name="Gu J."/>
        </authorList>
    </citation>
    <scope>INTERACTION WITH GIF AND GFER</scope>
    <scope>TISSUE SPECIFICITY</scope>
</reference>
<gene>
    <name type="primary">BNIPL</name>
</gene>
<feature type="chain" id="PRO_0000210770" description="Bcl-2/adenovirus E1B 19 kDa-interacting protein 2-like protein">
    <location>
        <begin position="1"/>
        <end position="357"/>
    </location>
</feature>
<feature type="domain" description="CRAL-TRIO" evidence="1">
    <location>
        <begin position="191"/>
        <end position="352"/>
    </location>
</feature>
<feature type="region of interest" description="Disordered" evidence="2">
    <location>
        <begin position="32"/>
        <end position="156"/>
    </location>
</feature>
<feature type="compositionally biased region" description="Basic and acidic residues" evidence="2">
    <location>
        <begin position="32"/>
        <end position="49"/>
    </location>
</feature>
<feature type="compositionally biased region" description="Polar residues" evidence="2">
    <location>
        <begin position="105"/>
        <end position="117"/>
    </location>
</feature>
<feature type="compositionally biased region" description="Acidic residues" evidence="2">
    <location>
        <begin position="119"/>
        <end position="134"/>
    </location>
</feature>
<feature type="compositionally biased region" description="Basic and acidic residues" evidence="2">
    <location>
        <begin position="136"/>
        <end position="149"/>
    </location>
</feature>
<feature type="splice variant" id="VSP_012448" description="In isoform 2 and isoform 3." evidence="5 6">
    <location>
        <begin position="1"/>
        <end position="82"/>
    </location>
</feature>
<feature type="splice variant" id="VSP_012449" description="In isoform 3." evidence="5">
    <original>LRKNLRALVVVHATWYVKAFLALLRPFISSKFTRKIRFLDSLGELAQLISLDQVHIPEAVRQLDRDLHGSGGT</original>
    <variation>VL</variation>
    <location>
        <begin position="285"/>
        <end position="357"/>
    </location>
</feature>
<feature type="sequence variant" id="VAR_051917" description="In dbSNP:rs12068365.">
    <original>S</original>
    <variation>N</variation>
    <location>
        <position position="65"/>
    </location>
</feature>
<feature type="sequence variant" id="VAR_051918" description="In dbSNP:rs12068365.">
    <original>S</original>
    <variation>N</variation>
    <location>
        <position position="226"/>
    </location>
</feature>
<keyword id="KW-0025">Alternative splicing</keyword>
<keyword id="KW-0053">Apoptosis</keyword>
<keyword id="KW-1267">Proteomics identification</keyword>
<keyword id="KW-1185">Reference proteome</keyword>
<dbReference type="EMBL" id="AF193056">
    <property type="protein sequence ID" value="AAG22484.1"/>
    <property type="molecule type" value="mRNA"/>
</dbReference>
<dbReference type="EMBL" id="AY078983">
    <property type="protein sequence ID" value="AAL85483.1"/>
    <property type="molecule type" value="mRNA"/>
</dbReference>
<dbReference type="EMBL" id="AY078984">
    <property type="protein sequence ID" value="AAL85484.1"/>
    <property type="molecule type" value="mRNA"/>
</dbReference>
<dbReference type="EMBL" id="AY033000">
    <property type="protein sequence ID" value="AAK54348.1"/>
    <property type="molecule type" value="mRNA"/>
</dbReference>
<dbReference type="EMBL" id="AL590133">
    <property type="status" value="NOT_ANNOTATED_CDS"/>
    <property type="molecule type" value="Genomic_DNA"/>
</dbReference>
<dbReference type="EMBL" id="BC027868">
    <property type="protein sequence ID" value="AAH27868.2"/>
    <property type="molecule type" value="mRNA"/>
</dbReference>
<dbReference type="EMBL" id="BC074779">
    <property type="protein sequence ID" value="AAH74779.3"/>
    <property type="molecule type" value="mRNA"/>
</dbReference>
<dbReference type="EMBL" id="BC074780">
    <property type="protein sequence ID" value="AAH74780.3"/>
    <property type="molecule type" value="mRNA"/>
</dbReference>
<dbReference type="CCDS" id="CCDS53362.1">
    <molecule id="Q7Z465-2"/>
</dbReference>
<dbReference type="CCDS" id="CCDS978.2">
    <molecule id="Q7Z465-1"/>
</dbReference>
<dbReference type="RefSeq" id="NP_001153114.1">
    <molecule id="Q7Z465-2"/>
    <property type="nucleotide sequence ID" value="NM_001159642.2"/>
</dbReference>
<dbReference type="RefSeq" id="NP_612122.2">
    <molecule id="Q7Z465-1"/>
    <property type="nucleotide sequence ID" value="NM_138278.4"/>
</dbReference>
<dbReference type="RefSeq" id="XP_024309264.1">
    <molecule id="Q7Z465-2"/>
    <property type="nucleotide sequence ID" value="XM_024453496.2"/>
</dbReference>
<dbReference type="RefSeq" id="XP_054190621.1">
    <molecule id="Q7Z465-2"/>
    <property type="nucleotide sequence ID" value="XM_054334646.1"/>
</dbReference>
<dbReference type="BioGRID" id="127211">
    <property type="interactions" value="16"/>
</dbReference>
<dbReference type="ELM" id="Q7Z465"/>
<dbReference type="FunCoup" id="Q7Z465">
    <property type="interactions" value="494"/>
</dbReference>
<dbReference type="IntAct" id="Q7Z465">
    <property type="interactions" value="8"/>
</dbReference>
<dbReference type="STRING" id="9606.ENSP00000357927"/>
<dbReference type="GlyGen" id="Q7Z465">
    <property type="glycosylation" value="1 site"/>
</dbReference>
<dbReference type="iPTMnet" id="Q7Z465"/>
<dbReference type="PhosphoSitePlus" id="Q7Z465"/>
<dbReference type="BioMuta" id="BNIPL"/>
<dbReference type="DMDM" id="57012595"/>
<dbReference type="jPOST" id="Q7Z465"/>
<dbReference type="MassIVE" id="Q7Z465"/>
<dbReference type="PaxDb" id="9606-ENSP00000357927"/>
<dbReference type="PeptideAtlas" id="Q7Z465"/>
<dbReference type="ProteomicsDB" id="69155">
    <molecule id="Q7Z465-1"/>
</dbReference>
<dbReference type="ProteomicsDB" id="69156">
    <molecule id="Q7Z465-2"/>
</dbReference>
<dbReference type="ProteomicsDB" id="69157">
    <molecule id="Q7Z465-3"/>
</dbReference>
<dbReference type="Antibodypedia" id="20308">
    <property type="antibodies" value="107 antibodies from 22 providers"/>
</dbReference>
<dbReference type="DNASU" id="149428"/>
<dbReference type="Ensembl" id="ENST00000295294.11">
    <molecule id="Q7Z465-2"/>
    <property type="protein sequence ID" value="ENSP00000295294.7"/>
    <property type="gene ID" value="ENSG00000163141.20"/>
</dbReference>
<dbReference type="Ensembl" id="ENST00000368931.8">
    <molecule id="Q7Z465-1"/>
    <property type="protein sequence ID" value="ENSP00000357927.3"/>
    <property type="gene ID" value="ENSG00000163141.20"/>
</dbReference>
<dbReference type="Ensembl" id="ENST00000485855.1">
    <molecule id="Q7Z465-3"/>
    <property type="protein sequence ID" value="ENSP00000435072.1"/>
    <property type="gene ID" value="ENSG00000163141.20"/>
</dbReference>
<dbReference type="Ensembl" id="ENST00000650563.1">
    <molecule id="Q7Z465-2"/>
    <property type="protein sequence ID" value="ENSP00000497659.1"/>
    <property type="gene ID" value="ENSG00000163141.20"/>
</dbReference>
<dbReference type="GeneID" id="149428"/>
<dbReference type="KEGG" id="hsa:149428"/>
<dbReference type="MANE-Select" id="ENST00000368931.8">
    <property type="protein sequence ID" value="ENSP00000357927.3"/>
    <property type="RefSeq nucleotide sequence ID" value="NM_138278.4"/>
    <property type="RefSeq protein sequence ID" value="NP_612122.2"/>
</dbReference>
<dbReference type="UCSC" id="uc001ewl.3">
    <molecule id="Q7Z465-1"/>
    <property type="organism name" value="human"/>
</dbReference>
<dbReference type="AGR" id="HGNC:16976"/>
<dbReference type="CTD" id="149428"/>
<dbReference type="DisGeNET" id="149428"/>
<dbReference type="GeneCards" id="BNIPL"/>
<dbReference type="HGNC" id="HGNC:16976">
    <property type="gene designation" value="BNIPL"/>
</dbReference>
<dbReference type="HPA" id="ENSG00000163141">
    <property type="expression patterns" value="Group enriched (esophagus, skin, vagina)"/>
</dbReference>
<dbReference type="MIM" id="611275">
    <property type="type" value="gene"/>
</dbReference>
<dbReference type="neXtProt" id="NX_Q7Z465"/>
<dbReference type="OpenTargets" id="ENSG00000163141"/>
<dbReference type="PharmGKB" id="PA38196"/>
<dbReference type="VEuPathDB" id="HostDB:ENSG00000163141"/>
<dbReference type="eggNOG" id="ENOG502QUPS">
    <property type="taxonomic scope" value="Eukaryota"/>
</dbReference>
<dbReference type="GeneTree" id="ENSGT00940000161723"/>
<dbReference type="HOGENOM" id="CLU_039135_1_0_1"/>
<dbReference type="InParanoid" id="Q7Z465"/>
<dbReference type="OMA" id="NYPYIME"/>
<dbReference type="OrthoDB" id="19923at2759"/>
<dbReference type="PAN-GO" id="Q7Z465">
    <property type="GO annotations" value="2 GO annotations based on evolutionary models"/>
</dbReference>
<dbReference type="PhylomeDB" id="Q7Z465"/>
<dbReference type="TreeFam" id="TF324164"/>
<dbReference type="PathwayCommons" id="Q7Z465"/>
<dbReference type="SignaLink" id="Q7Z465"/>
<dbReference type="BioGRID-ORCS" id="149428">
    <property type="hits" value="14 hits in 1152 CRISPR screens"/>
</dbReference>
<dbReference type="GeneWiki" id="BNIPL"/>
<dbReference type="GenomeRNAi" id="149428"/>
<dbReference type="Pharos" id="Q7Z465">
    <property type="development level" value="Tbio"/>
</dbReference>
<dbReference type="PRO" id="PR:Q7Z465"/>
<dbReference type="Proteomes" id="UP000005640">
    <property type="component" value="Chromosome 1"/>
</dbReference>
<dbReference type="RNAct" id="Q7Z465">
    <property type="molecule type" value="protein"/>
</dbReference>
<dbReference type="Bgee" id="ENSG00000163141">
    <property type="expression patterns" value="Expressed in lower esophagus mucosa and 118 other cell types or tissues"/>
</dbReference>
<dbReference type="ExpressionAtlas" id="Q7Z465">
    <property type="expression patterns" value="baseline and differential"/>
</dbReference>
<dbReference type="GO" id="GO:0005737">
    <property type="term" value="C:cytoplasm"/>
    <property type="evidence" value="ECO:0000318"/>
    <property type="project" value="GO_Central"/>
</dbReference>
<dbReference type="GO" id="GO:0005829">
    <property type="term" value="C:cytosol"/>
    <property type="evidence" value="ECO:0000314"/>
    <property type="project" value="UniProtKB"/>
</dbReference>
<dbReference type="GO" id="GO:0005634">
    <property type="term" value="C:nucleus"/>
    <property type="evidence" value="ECO:0000314"/>
    <property type="project" value="UniProtKB"/>
</dbReference>
<dbReference type="GO" id="GO:0042802">
    <property type="term" value="F:identical protein binding"/>
    <property type="evidence" value="ECO:0000353"/>
    <property type="project" value="UniProtKB"/>
</dbReference>
<dbReference type="GO" id="GO:0006915">
    <property type="term" value="P:apoptotic process"/>
    <property type="evidence" value="ECO:0000314"/>
    <property type="project" value="UniProtKB"/>
</dbReference>
<dbReference type="GO" id="GO:0008285">
    <property type="term" value="P:negative regulation of cell population proliferation"/>
    <property type="evidence" value="ECO:0000314"/>
    <property type="project" value="UniProtKB"/>
</dbReference>
<dbReference type="GO" id="GO:0040009">
    <property type="term" value="P:regulation of growth rate"/>
    <property type="evidence" value="ECO:0000314"/>
    <property type="project" value="UniProtKB"/>
</dbReference>
<dbReference type="CDD" id="cd00170">
    <property type="entry name" value="SEC14"/>
    <property type="match status" value="1"/>
</dbReference>
<dbReference type="FunFam" id="3.40.525.10:FF:000012">
    <property type="entry name" value="bcl-2/adenovirus E1B 19 kDa-interacting protein 2-like protein"/>
    <property type="match status" value="1"/>
</dbReference>
<dbReference type="Gene3D" id="3.40.525.10">
    <property type="entry name" value="CRAL-TRIO lipid binding domain"/>
    <property type="match status" value="1"/>
</dbReference>
<dbReference type="InterPro" id="IPR022181">
    <property type="entry name" value="Bcl2-/adenovirus-E1B"/>
</dbReference>
<dbReference type="InterPro" id="IPR001251">
    <property type="entry name" value="CRAL-TRIO_dom"/>
</dbReference>
<dbReference type="InterPro" id="IPR036865">
    <property type="entry name" value="CRAL-TRIO_dom_sf"/>
</dbReference>
<dbReference type="PANTHER" id="PTHR12112:SF21">
    <property type="entry name" value="BCL-2_ADENOVIRUS E1B 19 KDA-INTERACTING PROTEIN 2-LIKE PROTEIN"/>
    <property type="match status" value="1"/>
</dbReference>
<dbReference type="PANTHER" id="PTHR12112">
    <property type="entry name" value="BNIP - RELATED"/>
    <property type="match status" value="1"/>
</dbReference>
<dbReference type="Pfam" id="PF12496">
    <property type="entry name" value="BNIP2"/>
    <property type="match status" value="1"/>
</dbReference>
<dbReference type="Pfam" id="PF13716">
    <property type="entry name" value="CRAL_TRIO_2"/>
    <property type="match status" value="1"/>
</dbReference>
<dbReference type="SMART" id="SM00516">
    <property type="entry name" value="SEC14"/>
    <property type="match status" value="1"/>
</dbReference>
<dbReference type="SUPFAM" id="SSF52087">
    <property type="entry name" value="CRAL/TRIO domain"/>
    <property type="match status" value="1"/>
</dbReference>
<dbReference type="PROSITE" id="PS50191">
    <property type="entry name" value="CRAL_TRIO"/>
    <property type="match status" value="1"/>
</dbReference>
<comment type="function">
    <text evidence="4">May be a bridge molecule between BCL2 and ARHGAP1/CDC42 in promoting cell death.</text>
</comment>
<comment type="subunit">
    <text evidence="3 4">Homodimer. Interacts with BCL2, ARHGAP1, MIF and GFER.</text>
</comment>
<comment type="alternative products">
    <event type="alternative splicing"/>
    <isoform>
        <id>Q7Z465-1</id>
        <name>1</name>
        <name>BNIPL-2</name>
        <sequence type="displayed"/>
    </isoform>
    <isoform>
        <id>Q7Z465-2</id>
        <name>2</name>
        <name>BNIPL-1</name>
        <name>BNIP-Salpha</name>
        <sequence type="described" ref="VSP_012448"/>
    </isoform>
    <isoform>
        <id>Q7Z465-3</id>
        <name>3</name>
        <name>BNIP-Sbeta</name>
        <sequence type="described" ref="VSP_012448 VSP_012449"/>
    </isoform>
</comment>
<comment type="tissue specificity">
    <text evidence="3">Isoform 2 is expressed in placenta and lung.</text>
</comment>
<proteinExistence type="evidence at protein level"/>